<organism>
    <name type="scientific">Bacillus velezensis (strain DSM 23117 / BGSC 10A6 / LMG 26770 / FZB42)</name>
    <name type="common">Bacillus amyloliquefaciens subsp. plantarum</name>
    <dbReference type="NCBI Taxonomy" id="326423"/>
    <lineage>
        <taxon>Bacteria</taxon>
        <taxon>Bacillati</taxon>
        <taxon>Bacillota</taxon>
        <taxon>Bacilli</taxon>
        <taxon>Bacillales</taxon>
        <taxon>Bacillaceae</taxon>
        <taxon>Bacillus</taxon>
        <taxon>Bacillus amyloliquefaciens group</taxon>
    </lineage>
</organism>
<gene>
    <name evidence="1" type="primary">rpsS</name>
    <name type="ordered locus">RBAM_001450</name>
</gene>
<evidence type="ECO:0000255" key="1">
    <source>
        <dbReference type="HAMAP-Rule" id="MF_00531"/>
    </source>
</evidence>
<evidence type="ECO:0000305" key="2"/>
<dbReference type="EMBL" id="CP000560">
    <property type="protein sequence ID" value="ABS72568.1"/>
    <property type="molecule type" value="Genomic_DNA"/>
</dbReference>
<dbReference type="RefSeq" id="WP_003156472.1">
    <property type="nucleotide sequence ID" value="NC_009725.2"/>
</dbReference>
<dbReference type="SMR" id="A7Z0P2"/>
<dbReference type="GeneID" id="93079284"/>
<dbReference type="KEGG" id="bay:RBAM_001450"/>
<dbReference type="HOGENOM" id="CLU_144911_0_1_9"/>
<dbReference type="Proteomes" id="UP000001120">
    <property type="component" value="Chromosome"/>
</dbReference>
<dbReference type="GO" id="GO:0005737">
    <property type="term" value="C:cytoplasm"/>
    <property type="evidence" value="ECO:0007669"/>
    <property type="project" value="UniProtKB-ARBA"/>
</dbReference>
<dbReference type="GO" id="GO:0015935">
    <property type="term" value="C:small ribosomal subunit"/>
    <property type="evidence" value="ECO:0007669"/>
    <property type="project" value="InterPro"/>
</dbReference>
<dbReference type="GO" id="GO:0019843">
    <property type="term" value="F:rRNA binding"/>
    <property type="evidence" value="ECO:0007669"/>
    <property type="project" value="UniProtKB-UniRule"/>
</dbReference>
<dbReference type="GO" id="GO:0003735">
    <property type="term" value="F:structural constituent of ribosome"/>
    <property type="evidence" value="ECO:0007669"/>
    <property type="project" value="InterPro"/>
</dbReference>
<dbReference type="GO" id="GO:0000028">
    <property type="term" value="P:ribosomal small subunit assembly"/>
    <property type="evidence" value="ECO:0007669"/>
    <property type="project" value="TreeGrafter"/>
</dbReference>
<dbReference type="GO" id="GO:0006412">
    <property type="term" value="P:translation"/>
    <property type="evidence" value="ECO:0007669"/>
    <property type="project" value="UniProtKB-UniRule"/>
</dbReference>
<dbReference type="FunFam" id="3.30.860.10:FF:000001">
    <property type="entry name" value="30S ribosomal protein S19"/>
    <property type="match status" value="1"/>
</dbReference>
<dbReference type="Gene3D" id="3.30.860.10">
    <property type="entry name" value="30s Ribosomal Protein S19, Chain A"/>
    <property type="match status" value="1"/>
</dbReference>
<dbReference type="HAMAP" id="MF_00531">
    <property type="entry name" value="Ribosomal_uS19"/>
    <property type="match status" value="1"/>
</dbReference>
<dbReference type="InterPro" id="IPR002222">
    <property type="entry name" value="Ribosomal_uS19"/>
</dbReference>
<dbReference type="InterPro" id="IPR005732">
    <property type="entry name" value="Ribosomal_uS19_bac-type"/>
</dbReference>
<dbReference type="InterPro" id="IPR020934">
    <property type="entry name" value="Ribosomal_uS19_CS"/>
</dbReference>
<dbReference type="InterPro" id="IPR023575">
    <property type="entry name" value="Ribosomal_uS19_SF"/>
</dbReference>
<dbReference type="NCBIfam" id="TIGR01050">
    <property type="entry name" value="rpsS_bact"/>
    <property type="match status" value="1"/>
</dbReference>
<dbReference type="PANTHER" id="PTHR11880">
    <property type="entry name" value="RIBOSOMAL PROTEIN S19P FAMILY MEMBER"/>
    <property type="match status" value="1"/>
</dbReference>
<dbReference type="PANTHER" id="PTHR11880:SF8">
    <property type="entry name" value="SMALL RIBOSOMAL SUBUNIT PROTEIN US19M"/>
    <property type="match status" value="1"/>
</dbReference>
<dbReference type="Pfam" id="PF00203">
    <property type="entry name" value="Ribosomal_S19"/>
    <property type="match status" value="1"/>
</dbReference>
<dbReference type="PIRSF" id="PIRSF002144">
    <property type="entry name" value="Ribosomal_S19"/>
    <property type="match status" value="1"/>
</dbReference>
<dbReference type="PRINTS" id="PR00975">
    <property type="entry name" value="RIBOSOMALS19"/>
</dbReference>
<dbReference type="SUPFAM" id="SSF54570">
    <property type="entry name" value="Ribosomal protein S19"/>
    <property type="match status" value="1"/>
</dbReference>
<dbReference type="PROSITE" id="PS00323">
    <property type="entry name" value="RIBOSOMAL_S19"/>
    <property type="match status" value="1"/>
</dbReference>
<keyword id="KW-0687">Ribonucleoprotein</keyword>
<keyword id="KW-0689">Ribosomal protein</keyword>
<keyword id="KW-0694">RNA-binding</keyword>
<keyword id="KW-0699">rRNA-binding</keyword>
<protein>
    <recommendedName>
        <fullName evidence="1">Small ribosomal subunit protein uS19</fullName>
    </recommendedName>
    <alternativeName>
        <fullName evidence="2">30S ribosomal protein S19</fullName>
    </alternativeName>
</protein>
<feature type="chain" id="PRO_1000051012" description="Small ribosomal subunit protein uS19">
    <location>
        <begin position="1"/>
        <end position="92"/>
    </location>
</feature>
<name>RS19_BACVZ</name>
<proteinExistence type="inferred from homology"/>
<reference key="1">
    <citation type="journal article" date="2007" name="Nat. Biotechnol.">
        <title>Comparative analysis of the complete genome sequence of the plant growth-promoting bacterium Bacillus amyloliquefaciens FZB42.</title>
        <authorList>
            <person name="Chen X.H."/>
            <person name="Koumoutsi A."/>
            <person name="Scholz R."/>
            <person name="Eisenreich A."/>
            <person name="Schneider K."/>
            <person name="Heinemeyer I."/>
            <person name="Morgenstern B."/>
            <person name="Voss B."/>
            <person name="Hess W.R."/>
            <person name="Reva O."/>
            <person name="Junge H."/>
            <person name="Voigt B."/>
            <person name="Jungblut P.R."/>
            <person name="Vater J."/>
            <person name="Suessmuth R."/>
            <person name="Liesegang H."/>
            <person name="Strittmatter A."/>
            <person name="Gottschalk G."/>
            <person name="Borriss R."/>
        </authorList>
    </citation>
    <scope>NUCLEOTIDE SEQUENCE [LARGE SCALE GENOMIC DNA]</scope>
    <source>
        <strain>DSM 23117 / BGSC 10A6 / LMG 26770 / FZB42</strain>
    </source>
</reference>
<sequence>MARSLKKGPFVDGHLMTKIEKLNETDKKQVVKTWSRRSTIFPQFIGHTIAVYDGRKHVPVFISEDMVGHKLGEFAPTRTYKGHASDDKKTRR</sequence>
<comment type="function">
    <text evidence="1">Protein S19 forms a complex with S13 that binds strongly to the 16S ribosomal RNA.</text>
</comment>
<comment type="similarity">
    <text evidence="1">Belongs to the universal ribosomal protein uS19 family.</text>
</comment>
<accession>A7Z0P2</accession>